<proteinExistence type="evidence at protein level"/>
<name>CSF1_RAT</name>
<reference key="1">
    <citation type="journal article" date="2002" name="Biochem. Biophys. Res. Commun.">
        <title>Mutation of macrophage colony stimulating factor (Csf1) causes osteopetrosis in the tl rat.</title>
        <authorList>
            <person name="Dobbins D.E."/>
            <person name="Sood R."/>
            <person name="Hashiramoto A."/>
            <person name="Hansen C.T."/>
            <person name="Wilder R.L."/>
            <person name="Remmers E.F."/>
        </authorList>
    </citation>
    <scope>NUCLEOTIDE SEQUENCE [MRNA]</scope>
    <scope>DISEASE</scope>
    <source>
        <strain>Brown Norway/SsN</strain>
        <strain>Lewis/N</strain>
    </source>
</reference>
<reference key="2">
    <citation type="journal article" date="2002" name="Proc. Natl. Acad. Sci. U.S.A.">
        <title>The osteopetrotic mutation toothless (tl) is a loss-of-function frameshift mutation in the rat Csf1 gene: evidence of a crucial role for CSF-1 in osteoclastogenesis and endochondral ossification.</title>
        <authorList>
            <person name="Van Wesenbeeck L."/>
            <person name="Odgren P.R."/>
            <person name="MacKay C.A."/>
            <person name="D'Angelo M."/>
            <person name="Safadi F.F."/>
            <person name="Popoff S.N."/>
            <person name="Van Hul W."/>
            <person name="Marks S.C. Jr."/>
        </authorList>
    </citation>
    <scope>NUCLEOTIDE SEQUENCE [MRNA]</scope>
    <scope>DISEASE</scope>
    <source>
        <strain>Fischer 344</strain>
    </source>
</reference>
<reference key="3">
    <citation type="journal article" date="2015" name="J. Proteome Res.">
        <title>Peptidomics for studying limited proteolysis.</title>
        <authorList>
            <person name="Tsuchiya T."/>
            <person name="Osaki T."/>
            <person name="Minamino N."/>
            <person name="Sasaki K."/>
        </authorList>
    </citation>
    <scope>CLEAVAGE AFTER ARG-442</scope>
    <scope>IDENTIFICATION BY MASS SPECTROMETRY</scope>
</reference>
<accession>Q8JZQ0</accession>
<comment type="function">
    <text evidence="1">Cytokine that plays an essential role in the regulation of survival, proliferation and differentiation of hematopoietic precursor cells, especially mononuclear phagocytes, such as macrophages and monocytes. Promotes the release of pro-inflammatory chemokines, and thereby plays an important role in innate immunity and in inflammatory processes. Plays an important role in the regulation of osteoclast proliferation and differentiation, the regulation of bone resorption, and is required for normal bone development. Required for normal male and female fertility. Promotes reorganization of the actin cytoskeleton, regulates formation of membrane ruffles, cell adhesion and cell migration. Plays a role in lipoprotein clearance (By similarity).</text>
</comment>
<comment type="subunit">
    <text evidence="2">Homodimer or heterodimer; disulfide-linked. Likely to exist in multiple forms: homodimer consisting of 2 identical 150-200 kDa proteoglycan subunits, heterodimer consisting of a 150-200 kDa proteoglycan subunit and a truncated 43 kDa subunit, and a homodimer consisting of 2 identical 43 kDa subunits. Interacts with CSF1R.</text>
</comment>
<comment type="subcellular location">
    <subcellularLocation>
        <location evidence="1">Cell membrane</location>
        <topology evidence="1">Single-pass type I membrane protein</topology>
    </subcellularLocation>
</comment>
<comment type="subcellular location">
    <molecule>Processed macrophage colony-stimulating factor 1</molecule>
    <subcellularLocation>
        <location evidence="1">Secreted</location>
        <location evidence="1">Extracellular space</location>
    </subcellularLocation>
</comment>
<comment type="alternative products">
    <event type="alternative splicing"/>
    <isoform>
        <id>Q8JZQ0-1</id>
        <name>1</name>
        <sequence type="displayed"/>
    </isoform>
    <text>2 isoforms may be produced.</text>
</comment>
<comment type="PTM">
    <text evidence="2">N-glycosylated.</text>
</comment>
<comment type="PTM">
    <text evidence="2">O-glycosylated; contains chondroitin sulfate.</text>
</comment>
<comment type="disease">
    <text evidence="5 6">A defect in Csf1 is the cause of the toothless phenotype (tl). Toothless rats display osteoclastopenia, severe osteopetrosis, and dystrophic growth plates.</text>
</comment>
<dbReference type="EMBL" id="AF514355">
    <property type="protein sequence ID" value="AAM54135.1"/>
    <property type="molecule type" value="mRNA"/>
</dbReference>
<dbReference type="EMBL" id="AF514356">
    <property type="protein sequence ID" value="AAM54136.1"/>
    <property type="molecule type" value="mRNA"/>
</dbReference>
<dbReference type="EMBL" id="AF515736">
    <property type="protein sequence ID" value="AAM94802.1"/>
    <property type="molecule type" value="mRNA"/>
</dbReference>
<dbReference type="SMR" id="Q8JZQ0"/>
<dbReference type="FunCoup" id="Q8JZQ0">
    <property type="interactions" value="641"/>
</dbReference>
<dbReference type="STRING" id="10116.ENSRNOP00000073134"/>
<dbReference type="GlyCosmos" id="Q8JZQ0">
    <property type="glycosylation" value="4 sites, No reported glycans"/>
</dbReference>
<dbReference type="GlyGen" id="Q8JZQ0">
    <property type="glycosylation" value="8 sites"/>
</dbReference>
<dbReference type="PhosphoSitePlus" id="Q8JZQ0"/>
<dbReference type="PaxDb" id="10116-ENSRNOP00000025221"/>
<dbReference type="UCSC" id="RGD:621063">
    <molecule id="Q8JZQ0-1"/>
    <property type="organism name" value="rat"/>
</dbReference>
<dbReference type="AGR" id="RGD:621063"/>
<dbReference type="RGD" id="621063">
    <property type="gene designation" value="Csf1"/>
</dbReference>
<dbReference type="VEuPathDB" id="HostDB:ENSRNOG00000018659"/>
<dbReference type="eggNOG" id="ENOG502S271">
    <property type="taxonomic scope" value="Eukaryota"/>
</dbReference>
<dbReference type="InParanoid" id="Q8JZQ0"/>
<dbReference type="PhylomeDB" id="Q8JZQ0"/>
<dbReference type="Reactome" id="R-RNO-381426">
    <property type="pathway name" value="Regulation of Insulin-like Growth Factor (IGF) transport and uptake by Insulin-like Growth Factor Binding Proteins (IGFBPs)"/>
</dbReference>
<dbReference type="Reactome" id="R-RNO-449836">
    <property type="pathway name" value="Other interleukin signaling"/>
</dbReference>
<dbReference type="Reactome" id="R-RNO-8957275">
    <property type="pathway name" value="Post-translational protein phosphorylation"/>
</dbReference>
<dbReference type="Reactome" id="R-RNO-9856649">
    <property type="pathway name" value="Transcriptional and post-translational regulation of MITF-M expression and activity"/>
</dbReference>
<dbReference type="PRO" id="PR:Q8JZQ0"/>
<dbReference type="Proteomes" id="UP000002494">
    <property type="component" value="Chromosome 2"/>
</dbReference>
<dbReference type="Bgee" id="ENSRNOG00000018659">
    <property type="expression patterns" value="Expressed in spleen and 18 other cell types or tissues"/>
</dbReference>
<dbReference type="ExpressionAtlas" id="Q8JZQ0">
    <property type="expression patterns" value="baseline and differential"/>
</dbReference>
<dbReference type="GO" id="GO:1990682">
    <property type="term" value="C:CSF1-CSF1R complex"/>
    <property type="evidence" value="ECO:0000266"/>
    <property type="project" value="RGD"/>
</dbReference>
<dbReference type="GO" id="GO:0005576">
    <property type="term" value="C:extracellular region"/>
    <property type="evidence" value="ECO:0000314"/>
    <property type="project" value="RGD"/>
</dbReference>
<dbReference type="GO" id="GO:0005615">
    <property type="term" value="C:extracellular space"/>
    <property type="evidence" value="ECO:0000314"/>
    <property type="project" value="RGD"/>
</dbReference>
<dbReference type="GO" id="GO:0048471">
    <property type="term" value="C:perinuclear region of cytoplasm"/>
    <property type="evidence" value="ECO:0000266"/>
    <property type="project" value="RGD"/>
</dbReference>
<dbReference type="GO" id="GO:0005886">
    <property type="term" value="C:plasma membrane"/>
    <property type="evidence" value="ECO:0007669"/>
    <property type="project" value="UniProtKB-SubCell"/>
</dbReference>
<dbReference type="GO" id="GO:0005125">
    <property type="term" value="F:cytokine activity"/>
    <property type="evidence" value="ECO:0000266"/>
    <property type="project" value="RGD"/>
</dbReference>
<dbReference type="GO" id="GO:0008083">
    <property type="term" value="F:growth factor activity"/>
    <property type="evidence" value="ECO:0000266"/>
    <property type="project" value="RGD"/>
</dbReference>
<dbReference type="GO" id="GO:0042802">
    <property type="term" value="F:identical protein binding"/>
    <property type="evidence" value="ECO:0000353"/>
    <property type="project" value="RGD"/>
</dbReference>
<dbReference type="GO" id="GO:0005157">
    <property type="term" value="F:macrophage colony-stimulating factor receptor binding"/>
    <property type="evidence" value="ECO:0000266"/>
    <property type="project" value="RGD"/>
</dbReference>
<dbReference type="GO" id="GO:0042803">
    <property type="term" value="F:protein homodimerization activity"/>
    <property type="evidence" value="ECO:0000266"/>
    <property type="project" value="RGD"/>
</dbReference>
<dbReference type="GO" id="GO:0060444">
    <property type="term" value="P:branching involved in mammary gland duct morphogenesis"/>
    <property type="evidence" value="ECO:0000266"/>
    <property type="project" value="RGD"/>
</dbReference>
<dbReference type="GO" id="GO:0007169">
    <property type="term" value="P:cell surface receptor protein tyrosine kinase signaling pathway"/>
    <property type="evidence" value="ECO:0000266"/>
    <property type="project" value="RGD"/>
</dbReference>
<dbReference type="GO" id="GO:0071374">
    <property type="term" value="P:cellular response to parathyroid hormone stimulus"/>
    <property type="evidence" value="ECO:0000270"/>
    <property type="project" value="RGD"/>
</dbReference>
<dbReference type="GO" id="GO:0003006">
    <property type="term" value="P:developmental process involved in reproduction"/>
    <property type="evidence" value="ECO:0000266"/>
    <property type="project" value="RGD"/>
</dbReference>
<dbReference type="GO" id="GO:0048873">
    <property type="term" value="P:homeostasis of number of cells within a tissue"/>
    <property type="evidence" value="ECO:0000266"/>
    <property type="project" value="RGD"/>
</dbReference>
<dbReference type="GO" id="GO:0006954">
    <property type="term" value="P:inflammatory response"/>
    <property type="evidence" value="ECO:0007669"/>
    <property type="project" value="UniProtKB-KW"/>
</dbReference>
<dbReference type="GO" id="GO:0045087">
    <property type="term" value="P:innate immune response"/>
    <property type="evidence" value="ECO:0007669"/>
    <property type="project" value="UniProtKB-KW"/>
</dbReference>
<dbReference type="GO" id="GO:0038145">
    <property type="term" value="P:macrophage colony-stimulating factor signaling pathway"/>
    <property type="evidence" value="ECO:0000266"/>
    <property type="project" value="RGD"/>
</dbReference>
<dbReference type="GO" id="GO:0030225">
    <property type="term" value="P:macrophage differentiation"/>
    <property type="evidence" value="ECO:0000314"/>
    <property type="project" value="RGD"/>
</dbReference>
<dbReference type="GO" id="GO:0061519">
    <property type="term" value="P:macrophage homeostasis"/>
    <property type="evidence" value="ECO:0000266"/>
    <property type="project" value="RGD"/>
</dbReference>
<dbReference type="GO" id="GO:0060763">
    <property type="term" value="P:mammary duct terminal end bud growth"/>
    <property type="evidence" value="ECO:0000266"/>
    <property type="project" value="RGD"/>
</dbReference>
<dbReference type="GO" id="GO:0060611">
    <property type="term" value="P:mammary gland fat development"/>
    <property type="evidence" value="ECO:0000266"/>
    <property type="project" value="RGD"/>
</dbReference>
<dbReference type="GO" id="GO:0061518">
    <property type="term" value="P:microglial cell proliferation"/>
    <property type="evidence" value="ECO:0000266"/>
    <property type="project" value="RGD"/>
</dbReference>
<dbReference type="GO" id="GO:0030224">
    <property type="term" value="P:monocyte differentiation"/>
    <property type="evidence" value="ECO:0000266"/>
    <property type="project" value="RGD"/>
</dbReference>
<dbReference type="GO" id="GO:0035702">
    <property type="term" value="P:monocyte homeostasis"/>
    <property type="evidence" value="ECO:0000266"/>
    <property type="project" value="RGD"/>
</dbReference>
<dbReference type="GO" id="GO:0097529">
    <property type="term" value="P:myeloid leukocyte migration"/>
    <property type="evidence" value="ECO:0000266"/>
    <property type="project" value="RGD"/>
</dbReference>
<dbReference type="GO" id="GO:0001780">
    <property type="term" value="P:neutrophil homeostasis"/>
    <property type="evidence" value="ECO:0000266"/>
    <property type="project" value="RGD"/>
</dbReference>
<dbReference type="GO" id="GO:0001503">
    <property type="term" value="P:ossification"/>
    <property type="evidence" value="ECO:0000315"/>
    <property type="project" value="RGD"/>
</dbReference>
<dbReference type="GO" id="GO:0030316">
    <property type="term" value="P:osteoclast differentiation"/>
    <property type="evidence" value="ECO:0000315"/>
    <property type="project" value="RGD"/>
</dbReference>
<dbReference type="GO" id="GO:0002158">
    <property type="term" value="P:osteoclast proliferation"/>
    <property type="evidence" value="ECO:0000266"/>
    <property type="project" value="RGD"/>
</dbReference>
<dbReference type="GO" id="GO:0030335">
    <property type="term" value="P:positive regulation of cell migration"/>
    <property type="evidence" value="ECO:0000315"/>
    <property type="project" value="RGD"/>
</dbReference>
<dbReference type="GO" id="GO:0008284">
    <property type="term" value="P:positive regulation of cell population proliferation"/>
    <property type="evidence" value="ECO:0000266"/>
    <property type="project" value="RGD"/>
</dbReference>
<dbReference type="GO" id="GO:0001954">
    <property type="term" value="P:positive regulation of cell-matrix adhesion"/>
    <property type="evidence" value="ECO:0000266"/>
    <property type="project" value="RGD"/>
</dbReference>
<dbReference type="GO" id="GO:0010628">
    <property type="term" value="P:positive regulation of gene expression"/>
    <property type="evidence" value="ECO:0000266"/>
    <property type="project" value="RGD"/>
</dbReference>
<dbReference type="GO" id="GO:0002687">
    <property type="term" value="P:positive regulation of leukocyte migration"/>
    <property type="evidence" value="ECO:0000266"/>
    <property type="project" value="RGD"/>
</dbReference>
<dbReference type="GO" id="GO:0010759">
    <property type="term" value="P:positive regulation of macrophage chemotaxis"/>
    <property type="evidence" value="ECO:0000266"/>
    <property type="project" value="RGD"/>
</dbReference>
<dbReference type="GO" id="GO:1902228">
    <property type="term" value="P:positive regulation of macrophage colony-stimulating factor signaling pathway"/>
    <property type="evidence" value="ECO:0000266"/>
    <property type="project" value="RGD"/>
</dbReference>
<dbReference type="GO" id="GO:0010744">
    <property type="term" value="P:positive regulation of macrophage derived foam cell differentiation"/>
    <property type="evidence" value="ECO:0000266"/>
    <property type="project" value="RGD"/>
</dbReference>
<dbReference type="GO" id="GO:0045651">
    <property type="term" value="P:positive regulation of macrophage differentiation"/>
    <property type="evidence" value="ECO:0000266"/>
    <property type="project" value="RGD"/>
</dbReference>
<dbReference type="GO" id="GO:1905523">
    <property type="term" value="P:positive regulation of macrophage migration"/>
    <property type="evidence" value="ECO:0000266"/>
    <property type="project" value="RGD"/>
</dbReference>
<dbReference type="GO" id="GO:0120041">
    <property type="term" value="P:positive regulation of macrophage proliferation"/>
    <property type="evidence" value="ECO:0000315"/>
    <property type="project" value="RGD"/>
</dbReference>
<dbReference type="GO" id="GO:1904141">
    <property type="term" value="P:positive regulation of microglial cell migration"/>
    <property type="evidence" value="ECO:0000266"/>
    <property type="project" value="RGD"/>
</dbReference>
<dbReference type="GO" id="GO:0045657">
    <property type="term" value="P:positive regulation of monocyte differentiation"/>
    <property type="evidence" value="ECO:0000266"/>
    <property type="project" value="RGD"/>
</dbReference>
<dbReference type="GO" id="GO:0071677">
    <property type="term" value="P:positive regulation of mononuclear cell migration"/>
    <property type="evidence" value="ECO:0000315"/>
    <property type="project" value="RGD"/>
</dbReference>
<dbReference type="GO" id="GO:0032946">
    <property type="term" value="P:positive regulation of mononuclear cell proliferation"/>
    <property type="evidence" value="ECO:0000266"/>
    <property type="project" value="RGD"/>
</dbReference>
<dbReference type="GO" id="GO:0040018">
    <property type="term" value="P:positive regulation of multicellular organism growth"/>
    <property type="evidence" value="ECO:0000266"/>
    <property type="project" value="RGD"/>
</dbReference>
<dbReference type="GO" id="GO:0042488">
    <property type="term" value="P:positive regulation of odontogenesis of dentin-containing tooth"/>
    <property type="evidence" value="ECO:0000266"/>
    <property type="project" value="RGD"/>
</dbReference>
<dbReference type="GO" id="GO:0045672">
    <property type="term" value="P:positive regulation of osteoclast differentiation"/>
    <property type="evidence" value="ECO:0000266"/>
    <property type="project" value="RGD"/>
</dbReference>
<dbReference type="GO" id="GO:0051247">
    <property type="term" value="P:positive regulation of protein metabolic process"/>
    <property type="evidence" value="ECO:0000266"/>
    <property type="project" value="RGD"/>
</dbReference>
<dbReference type="GO" id="GO:0046579">
    <property type="term" value="P:positive regulation of Ras protein signal transduction"/>
    <property type="evidence" value="ECO:0000266"/>
    <property type="project" value="RGD"/>
</dbReference>
<dbReference type="GO" id="GO:0007265">
    <property type="term" value="P:Ras protein signal transduction"/>
    <property type="evidence" value="ECO:0000266"/>
    <property type="project" value="RGD"/>
</dbReference>
<dbReference type="GO" id="GO:0030278">
    <property type="term" value="P:regulation of ossification"/>
    <property type="evidence" value="ECO:0000266"/>
    <property type="project" value="RGD"/>
</dbReference>
<dbReference type="GO" id="GO:0002931">
    <property type="term" value="P:response to ischemia"/>
    <property type="evidence" value="ECO:0000266"/>
    <property type="project" value="RGD"/>
</dbReference>
<dbReference type="GO" id="GO:0032496">
    <property type="term" value="P:response to lipopolysaccharide"/>
    <property type="evidence" value="ECO:0000270"/>
    <property type="project" value="RGD"/>
</dbReference>
<dbReference type="GO" id="GO:0009612">
    <property type="term" value="P:response to mechanical stimulus"/>
    <property type="evidence" value="ECO:0000270"/>
    <property type="project" value="RGD"/>
</dbReference>
<dbReference type="FunFam" id="1.20.1250.10:FF:000010">
    <property type="entry name" value="Macrophage colony-stimulating factor 1"/>
    <property type="match status" value="1"/>
</dbReference>
<dbReference type="Gene3D" id="1.20.1250.10">
    <property type="match status" value="1"/>
</dbReference>
<dbReference type="InterPro" id="IPR009079">
    <property type="entry name" value="4_helix_cytokine-like_core"/>
</dbReference>
<dbReference type="InterPro" id="IPR008001">
    <property type="entry name" value="MCSF-1"/>
</dbReference>
<dbReference type="PANTHER" id="PTHR10058">
    <property type="entry name" value="MACROPHAGE COLONY STIMULATING FACTOR"/>
    <property type="match status" value="1"/>
</dbReference>
<dbReference type="PANTHER" id="PTHR10058:SF0">
    <property type="entry name" value="MACROPHAGE COLONY-STIMULATING FACTOR 1"/>
    <property type="match status" value="1"/>
</dbReference>
<dbReference type="Pfam" id="PF05337">
    <property type="entry name" value="CSF-1"/>
    <property type="match status" value="1"/>
</dbReference>
<dbReference type="PIRSF" id="PIRSF001948">
    <property type="entry name" value="MCSF-1"/>
    <property type="match status" value="1"/>
</dbReference>
<dbReference type="SUPFAM" id="SSF47266">
    <property type="entry name" value="4-helical cytokines"/>
    <property type="match status" value="1"/>
</dbReference>
<gene>
    <name type="primary">Csf1</name>
    <name type="synonym">Csfm</name>
</gene>
<sequence length="566" mass="62187">MTARGAAGRCPSSTWMGSRLLLVCLLVSRSVAEVSEHCSHMIGNGHLQILQQLIDSQMETACLIEYKFVDQEQLDDPVCYLKKAFVLVQVIIEETMRFKDNTPNANATERLQELSMKLNSCFIKDYKEQNEACVQTYKESPLRLLEKIKNFFNETKNFLEKDWNIFSKNCNDSFAKCSSRDVVTKPDCNCLYPKATPSSDLASASPHQPPAPSMAPLADLAWDDSQRTEGSSLLPSDLPLRIEDPGSAKQRPPRSTCQTLESTEQPNHEDPQPHPSAGAPIPGVEDIIESSMGTNWVLEEASGEASEGFLTQERKFSPSNPVGGSIQAETDRPWARSASSPFPKLTEDQQPTNITDTPLTEVNPMRPTGQTLNNTPEKTDGSSTLREDQQEPRSPHFATLNPQRVGNSATPYAKLLPPKSHSWGIVLPLGELEGKKSTRDRRSPAELKGGPASEGAARPVAQSTRDRRSPAELKGGPASEGAARPVARFNSIPLTDTGSSIQDPQTSAFVFWVLGIILVLLAVGGLLFYSWKRRSHRDPRTLDSSVGRPEGSSLAQDEDRQVELPV</sequence>
<keyword id="KW-0025">Alternative splicing</keyword>
<keyword id="KW-1003">Cell membrane</keyword>
<keyword id="KW-0202">Cytokine</keyword>
<keyword id="KW-1015">Disulfide bond</keyword>
<keyword id="KW-0325">Glycoprotein</keyword>
<keyword id="KW-0339">Growth factor</keyword>
<keyword id="KW-0391">Immunity</keyword>
<keyword id="KW-0395">Inflammatory response</keyword>
<keyword id="KW-0399">Innate immunity</keyword>
<keyword id="KW-0472">Membrane</keyword>
<keyword id="KW-0654">Proteoglycan</keyword>
<keyword id="KW-1185">Reference proteome</keyword>
<keyword id="KW-0964">Secreted</keyword>
<keyword id="KW-0732">Signal</keyword>
<keyword id="KW-0812">Transmembrane</keyword>
<keyword id="KW-1133">Transmembrane helix</keyword>
<evidence type="ECO:0000250" key="1"/>
<evidence type="ECO:0000250" key="2">
    <source>
        <dbReference type="UniProtKB" id="P09603"/>
    </source>
</evidence>
<evidence type="ECO:0000255" key="3"/>
<evidence type="ECO:0000256" key="4">
    <source>
        <dbReference type="SAM" id="MobiDB-lite"/>
    </source>
</evidence>
<evidence type="ECO:0000269" key="5">
    <source>
    </source>
</evidence>
<evidence type="ECO:0000269" key="6">
    <source>
    </source>
</evidence>
<evidence type="ECO:0000305" key="7">
    <source>
    </source>
</evidence>
<feature type="signal peptide" evidence="3">
    <location>
        <begin position="1"/>
        <end position="32"/>
    </location>
</feature>
<feature type="chain" id="PRO_0000005859" description="Macrophage colony-stimulating factor 1">
    <location>
        <begin position="33"/>
        <end position="566"/>
    </location>
</feature>
<feature type="chain" id="PRO_0000296233" description="Processed macrophage colony-stimulating factor 1" evidence="7">
    <location>
        <begin position="33"/>
        <end position="442"/>
    </location>
</feature>
<feature type="chain" id="PRO_0000457793" description="Macrophage colony-stimulating factor 1 43 kDa subunit" evidence="2">
    <location>
        <begin position="33"/>
        <end position="254"/>
    </location>
</feature>
<feature type="topological domain" description="Extracellular" evidence="3">
    <location>
        <begin position="33"/>
        <end position="508"/>
    </location>
</feature>
<feature type="transmembrane region" description="Helical" evidence="3">
    <location>
        <begin position="509"/>
        <end position="531"/>
    </location>
</feature>
<feature type="topological domain" description="Cytoplasmic" evidence="3">
    <location>
        <begin position="532"/>
        <end position="566"/>
    </location>
</feature>
<feature type="region of interest" description="Disordered" evidence="4">
    <location>
        <begin position="197"/>
        <end position="417"/>
    </location>
</feature>
<feature type="region of interest" description="Disordered" evidence="4">
    <location>
        <begin position="434"/>
        <end position="484"/>
    </location>
</feature>
<feature type="region of interest" description="Disordered" evidence="4">
    <location>
        <begin position="538"/>
        <end position="566"/>
    </location>
</feature>
<feature type="compositionally biased region" description="Polar residues" evidence="4">
    <location>
        <begin position="253"/>
        <end position="265"/>
    </location>
</feature>
<feature type="compositionally biased region" description="Polar residues" evidence="4">
    <location>
        <begin position="348"/>
        <end position="360"/>
    </location>
</feature>
<feature type="compositionally biased region" description="Basic and acidic residues" evidence="4">
    <location>
        <begin position="377"/>
        <end position="394"/>
    </location>
</feature>
<feature type="compositionally biased region" description="Polar residues" evidence="4">
    <location>
        <begin position="400"/>
        <end position="410"/>
    </location>
</feature>
<feature type="compositionally biased region" description="Basic and acidic residues" evidence="4">
    <location>
        <begin position="434"/>
        <end position="445"/>
    </location>
</feature>
<feature type="compositionally biased region" description="Basic and acidic residues" evidence="4">
    <location>
        <begin position="557"/>
        <end position="566"/>
    </location>
</feature>
<feature type="glycosylation site" description="N-linked (GlcNAc...) asparagine" evidence="3">
    <location>
        <position position="106"/>
    </location>
</feature>
<feature type="glycosylation site" description="N-linked (GlcNAc...) asparagine" evidence="3">
    <location>
        <position position="153"/>
    </location>
</feature>
<feature type="glycosylation site" description="N-linked (GlcNAc...) asparagine" evidence="3">
    <location>
        <position position="171"/>
    </location>
</feature>
<feature type="glycosylation site" description="O-linked (Xyl...) (chondroitin sulfate) serine" evidence="2">
    <location>
        <position position="302"/>
    </location>
</feature>
<feature type="glycosylation site" description="N-linked (GlcNAc...) asparagine" evidence="3">
    <location>
        <position position="353"/>
    </location>
</feature>
<feature type="glycosylation site" description="O-linked (GalNAc...) threonine" evidence="2">
    <location>
        <position position="355"/>
    </location>
</feature>
<feature type="glycosylation site" description="O-linked (GalNAc...) threonine" evidence="2">
    <location>
        <position position="357"/>
    </location>
</feature>
<protein>
    <recommendedName>
        <fullName>Macrophage colony-stimulating factor 1</fullName>
        <shortName>CSF-1</shortName>
        <shortName>MCSF</shortName>
    </recommendedName>
    <alternativeName>
        <fullName evidence="2">Proteoglycan macrophage colony-stimulating factor</fullName>
        <shortName evidence="2">PG-M-CSF</shortName>
    </alternativeName>
    <component>
        <recommendedName>
            <fullName>Processed macrophage colony-stimulating factor 1</fullName>
        </recommendedName>
    </component>
    <component>
        <recommendedName>
            <fullName evidence="2">Macrophage colony-stimulating factor 1 43 kDa subunit</fullName>
        </recommendedName>
    </component>
</protein>
<organism>
    <name type="scientific">Rattus norvegicus</name>
    <name type="common">Rat</name>
    <dbReference type="NCBI Taxonomy" id="10116"/>
    <lineage>
        <taxon>Eukaryota</taxon>
        <taxon>Metazoa</taxon>
        <taxon>Chordata</taxon>
        <taxon>Craniata</taxon>
        <taxon>Vertebrata</taxon>
        <taxon>Euteleostomi</taxon>
        <taxon>Mammalia</taxon>
        <taxon>Eutheria</taxon>
        <taxon>Euarchontoglires</taxon>
        <taxon>Glires</taxon>
        <taxon>Rodentia</taxon>
        <taxon>Myomorpha</taxon>
        <taxon>Muroidea</taxon>
        <taxon>Muridae</taxon>
        <taxon>Murinae</taxon>
        <taxon>Rattus</taxon>
    </lineage>
</organism>